<accession>Q4QNS5</accession>
<comment type="function">
    <text evidence="1">Likely functions in the release of soluble HxuA from the cell.</text>
</comment>
<comment type="function">
    <text evidence="1">Probable member of a two partner secretion pathway (TPS) in which it mediates the secretion of HuxA.</text>
</comment>
<comment type="subcellular location">
    <subcellularLocation>
        <location evidence="1">Cell outer membrane</location>
    </subcellularLocation>
</comment>
<comment type="domain">
    <text evidence="1">Probably a beta-barrel protein.</text>
</comment>
<comment type="similarity">
    <text evidence="3">Belongs to the TPS (TC 1.B.20) family.</text>
</comment>
<organism>
    <name type="scientific">Haemophilus influenzae (strain 86-028NP)</name>
    <dbReference type="NCBI Taxonomy" id="281310"/>
    <lineage>
        <taxon>Bacteria</taxon>
        <taxon>Pseudomonadati</taxon>
        <taxon>Pseudomonadota</taxon>
        <taxon>Gammaproteobacteria</taxon>
        <taxon>Pasteurellales</taxon>
        <taxon>Pasteurellaceae</taxon>
        <taxon>Haemophilus</taxon>
    </lineage>
</organism>
<keyword id="KW-0998">Cell outer membrane</keyword>
<keyword id="KW-0406">Ion transport</keyword>
<keyword id="KW-0472">Membrane</keyword>
<keyword id="KW-0626">Porin</keyword>
<keyword id="KW-0653">Protein transport</keyword>
<keyword id="KW-0732">Signal</keyword>
<keyword id="KW-0812">Transmembrane</keyword>
<keyword id="KW-1134">Transmembrane beta strand</keyword>
<keyword id="KW-0813">Transport</keyword>
<name>HXUB_HAEI8</name>
<proteinExistence type="inferred from homology"/>
<protein>
    <recommendedName>
        <fullName>Heme/hemopexin transporter protein HuxB</fullName>
    </recommendedName>
</protein>
<dbReference type="EMBL" id="CP000057">
    <property type="protein sequence ID" value="AAX87322.1"/>
    <property type="molecule type" value="Genomic_DNA"/>
</dbReference>
<dbReference type="RefSeq" id="WP_011271953.1">
    <property type="nucleotide sequence ID" value="NC_007146.2"/>
</dbReference>
<dbReference type="SMR" id="Q4QNS5"/>
<dbReference type="KEGG" id="hit:NTHI0370"/>
<dbReference type="HOGENOM" id="CLU_021521_2_2_6"/>
<dbReference type="Proteomes" id="UP000002525">
    <property type="component" value="Chromosome"/>
</dbReference>
<dbReference type="GO" id="GO:0009279">
    <property type="term" value="C:cell outer membrane"/>
    <property type="evidence" value="ECO:0007669"/>
    <property type="project" value="UniProtKB-SubCell"/>
</dbReference>
<dbReference type="GO" id="GO:0046930">
    <property type="term" value="C:pore complex"/>
    <property type="evidence" value="ECO:0007669"/>
    <property type="project" value="UniProtKB-KW"/>
</dbReference>
<dbReference type="GO" id="GO:0098046">
    <property type="term" value="C:type V protein secretion system complex"/>
    <property type="evidence" value="ECO:0007669"/>
    <property type="project" value="TreeGrafter"/>
</dbReference>
<dbReference type="GO" id="GO:0015288">
    <property type="term" value="F:porin activity"/>
    <property type="evidence" value="ECO:0007669"/>
    <property type="project" value="UniProtKB-KW"/>
</dbReference>
<dbReference type="GO" id="GO:0008320">
    <property type="term" value="F:protein transmembrane transporter activity"/>
    <property type="evidence" value="ECO:0007669"/>
    <property type="project" value="TreeGrafter"/>
</dbReference>
<dbReference type="GO" id="GO:0006811">
    <property type="term" value="P:monoatomic ion transport"/>
    <property type="evidence" value="ECO:0007669"/>
    <property type="project" value="UniProtKB-KW"/>
</dbReference>
<dbReference type="GO" id="GO:0046819">
    <property type="term" value="P:protein secretion by the type V secretion system"/>
    <property type="evidence" value="ECO:0007669"/>
    <property type="project" value="TreeGrafter"/>
</dbReference>
<dbReference type="Gene3D" id="3.10.20.310">
    <property type="entry name" value="membrane protein fhac"/>
    <property type="match status" value="1"/>
</dbReference>
<dbReference type="Gene3D" id="2.40.160.50">
    <property type="entry name" value="membrane protein fhac: a member of the omp85/tpsb transporter family"/>
    <property type="match status" value="1"/>
</dbReference>
<dbReference type="InterPro" id="IPR005565">
    <property type="entry name" value="Hemolysn_activator_HlyB_C"/>
</dbReference>
<dbReference type="InterPro" id="IPR013686">
    <property type="entry name" value="Polypept-transport_assoc_ShlB"/>
</dbReference>
<dbReference type="InterPro" id="IPR034746">
    <property type="entry name" value="POTRA"/>
</dbReference>
<dbReference type="InterPro" id="IPR051544">
    <property type="entry name" value="TPS_OM_transporter"/>
</dbReference>
<dbReference type="PANTHER" id="PTHR34597:SF1">
    <property type="entry name" value="HEME_HEMOPEXIN TRANSPORTER PROTEIN HUXB"/>
    <property type="match status" value="1"/>
</dbReference>
<dbReference type="PANTHER" id="PTHR34597">
    <property type="entry name" value="SLR1661 PROTEIN"/>
    <property type="match status" value="1"/>
</dbReference>
<dbReference type="Pfam" id="PF08479">
    <property type="entry name" value="POTRA_2"/>
    <property type="match status" value="1"/>
</dbReference>
<dbReference type="Pfam" id="PF03865">
    <property type="entry name" value="ShlB"/>
    <property type="match status" value="1"/>
</dbReference>
<dbReference type="PROSITE" id="PS51779">
    <property type="entry name" value="POTRA"/>
    <property type="match status" value="1"/>
</dbReference>
<sequence>MKMRPRYSVIASAVSLGFVLSKSVMALGQPDTGSLNRELEQRRIQPEAKPSGELFNQAAKSPYTAQYKQELKFPLTQVQILDRNNQEVVTDELAHILKNYVGKEVSLSDLSNLANEISEFYRNNNYLVAKAILPPQEIEQGTVKILLLKGNVGEIRLQNHSALSNKFVSRLSNTTVNTSEFILKDELEKFALTINDVPGVNAGLQLSAGKKVGEANLLIKINDAKRFSSYVSVDNQGNKYTGRYRLAAGTKVNNLTGWGDELKLDLLSSNQANLKNARIDYSSLIDGYSTRFGVTANYLHYKLGGNFKSLQSQGHSHNLGAYLLHPTIRTPNFRLSTKVSFNHQNLTDEQQAVTVKQKRKINSLTVGIDGSWNLIKDGTTYFSLSTLFGNLANQTNEKKHNAKEDFQPQSHFTVYNYRLSHEQILPKSFAFNIGINGQFADKTLESSQKMLLGGLSGVRGHQAGAASVDEGHLIQTEFKHYLPVFSQSVLVSSLFYDYGFGKYYKNSQSLAQSVKNSVKLQSVGAGLSFSDAGSYAINVSVAKPLDNNIDNADKHQFWLSMIKTF</sequence>
<feature type="signal peptide" evidence="1">
    <location>
        <begin position="1"/>
        <end position="26"/>
    </location>
</feature>
<feature type="chain" id="PRO_0000230982" description="Heme/hemopexin transporter protein HuxB">
    <location>
        <begin position="27"/>
        <end position="565"/>
    </location>
</feature>
<feature type="domain" description="POTRA" evidence="2">
    <location>
        <begin position="73"/>
        <end position="150"/>
    </location>
</feature>
<reference key="1">
    <citation type="journal article" date="2005" name="J. Bacteriol.">
        <title>Genomic sequence of an otitis media isolate of nontypeable Haemophilus influenzae: comparative study with H. influenzae serotype d, strain KW20.</title>
        <authorList>
            <person name="Harrison A."/>
            <person name="Dyer D.W."/>
            <person name="Gillaspy A."/>
            <person name="Ray W.C."/>
            <person name="Mungur R."/>
            <person name="Carson M.B."/>
            <person name="Zhong H."/>
            <person name="Gipson J."/>
            <person name="Gipson M."/>
            <person name="Johnson L.S."/>
            <person name="Lewis L."/>
            <person name="Bakaletz L.O."/>
            <person name="Munson R.S. Jr."/>
        </authorList>
    </citation>
    <scope>NUCLEOTIDE SEQUENCE [LARGE SCALE GENOMIC DNA]</scope>
    <source>
        <strain>86-028NP</strain>
    </source>
</reference>
<gene>
    <name type="primary">hxuB</name>
    <name type="ordered locus">NTHI0370</name>
</gene>
<evidence type="ECO:0000250" key="1"/>
<evidence type="ECO:0000255" key="2">
    <source>
        <dbReference type="PROSITE-ProRule" id="PRU01115"/>
    </source>
</evidence>
<evidence type="ECO:0000305" key="3"/>